<proteinExistence type="inferred from homology"/>
<reference key="1">
    <citation type="journal article" date="1999" name="Can. J. Microbiol.">
        <title>Identification of genes unique to Mo-independent nitrogenase systems in diverse diazotrophs.</title>
        <authorList>
            <person name="Loveless T.M."/>
            <person name="Bishop P.E."/>
        </authorList>
    </citation>
    <scope>NUCLEOTIDE SEQUENCE [GENOMIC DNA]</scope>
</reference>
<organism>
    <name type="scientific">Azotobacter salinestris</name>
    <dbReference type="NCBI Taxonomy" id="69964"/>
    <lineage>
        <taxon>Bacteria</taxon>
        <taxon>Pseudomonadati</taxon>
        <taxon>Pseudomonadota</taxon>
        <taxon>Gammaproteobacteria</taxon>
        <taxon>Pseudomonadales</taxon>
        <taxon>Pseudomonadaceae</taxon>
        <taxon>Azotobacter</taxon>
    </lineage>
</organism>
<evidence type="ECO:0000250" key="1"/>
<comment type="function">
    <text>The key enzymatic reactions in nitrogen fixation are catalyzed by the nitrogenase complex, which has 2 components: the iron protein (component 2) and a component 1 which is either a molybdenum-iron protein, a vanadium-iron, or an iron-iron protein.</text>
</comment>
<comment type="catalytic activity">
    <reaction>
        <text>N2 + 8 reduced [2Fe-2S]-[ferredoxin] + 16 ATP + 16 H2O = H2 + 8 oxidized [2Fe-2S]-[ferredoxin] + 2 NH4(+) + 16 ADP + 16 phosphate + 6 H(+)</text>
        <dbReference type="Rhea" id="RHEA:21448"/>
        <dbReference type="Rhea" id="RHEA-COMP:10000"/>
        <dbReference type="Rhea" id="RHEA-COMP:10001"/>
        <dbReference type="ChEBI" id="CHEBI:15377"/>
        <dbReference type="ChEBI" id="CHEBI:15378"/>
        <dbReference type="ChEBI" id="CHEBI:17997"/>
        <dbReference type="ChEBI" id="CHEBI:18276"/>
        <dbReference type="ChEBI" id="CHEBI:28938"/>
        <dbReference type="ChEBI" id="CHEBI:30616"/>
        <dbReference type="ChEBI" id="CHEBI:33737"/>
        <dbReference type="ChEBI" id="CHEBI:33738"/>
        <dbReference type="ChEBI" id="CHEBI:43474"/>
        <dbReference type="ChEBI" id="CHEBI:456216"/>
        <dbReference type="EC" id="1.18.6.1"/>
    </reaction>
</comment>
<comment type="cofactor">
    <cofactor evidence="1">
        <name>iron-sulfur cluster</name>
        <dbReference type="ChEBI" id="CHEBI:30408"/>
    </cofactor>
</comment>
<comment type="cofactor">
    <cofactor evidence="1">
        <name>vanadium cation</name>
        <dbReference type="ChEBI" id="CHEBI:35172"/>
    </cofactor>
</comment>
<comment type="subunit">
    <text evidence="1">Hexamer of two alpha, two beta, and two delta chains.</text>
</comment>
<accession>O68951</accession>
<gene>
    <name type="primary">vnfG</name>
</gene>
<keyword id="KW-0067">ATP-binding</keyword>
<keyword id="KW-0408">Iron</keyword>
<keyword id="KW-0411">Iron-sulfur</keyword>
<keyword id="KW-0479">Metal-binding</keyword>
<keyword id="KW-0535">Nitrogen fixation</keyword>
<keyword id="KW-0547">Nucleotide-binding</keyword>
<keyword id="KW-0560">Oxidoreductase</keyword>
<keyword id="KW-0837">Vanadium</keyword>
<sequence length="113" mass="13379">MSQSRLDDLFAYVEERCLWQFFSRTWDREENIEGVLNQVCRLLTGQEPLRGTPQERLFYADALAMANDVRERFPWASQVNKEEIAFLIDGLKSRLVDVTITRSTNRELNHHLY</sequence>
<dbReference type="EC" id="1.18.6.1"/>
<dbReference type="EMBL" id="AF058782">
    <property type="protein sequence ID" value="AAC14338.1"/>
    <property type="molecule type" value="Genomic_DNA"/>
</dbReference>
<dbReference type="RefSeq" id="WP_152386421.1">
    <property type="nucleotide sequence ID" value="NZ_CP045302.1"/>
</dbReference>
<dbReference type="SMR" id="O68951"/>
<dbReference type="OrthoDB" id="198407at2"/>
<dbReference type="GO" id="GO:0005524">
    <property type="term" value="F:ATP binding"/>
    <property type="evidence" value="ECO:0007669"/>
    <property type="project" value="UniProtKB-KW"/>
</dbReference>
<dbReference type="GO" id="GO:0051536">
    <property type="term" value="F:iron-sulfur cluster binding"/>
    <property type="evidence" value="ECO:0007669"/>
    <property type="project" value="UniProtKB-KW"/>
</dbReference>
<dbReference type="GO" id="GO:0046872">
    <property type="term" value="F:metal ion binding"/>
    <property type="evidence" value="ECO:0007669"/>
    <property type="project" value="UniProtKB-KW"/>
</dbReference>
<dbReference type="GO" id="GO:0016163">
    <property type="term" value="F:nitrogenase activity"/>
    <property type="evidence" value="ECO:0007669"/>
    <property type="project" value="UniProtKB-EC"/>
</dbReference>
<dbReference type="GO" id="GO:0009399">
    <property type="term" value="P:nitrogen fixation"/>
    <property type="evidence" value="ECO:0007669"/>
    <property type="project" value="UniProtKB-KW"/>
</dbReference>
<dbReference type="InterPro" id="IPR014279">
    <property type="entry name" value="Nase_V-Fe_dsu"/>
</dbReference>
<dbReference type="InterPro" id="IPR004349">
    <property type="entry name" value="V/Nase_d_su"/>
</dbReference>
<dbReference type="NCBIfam" id="TIGR02930">
    <property type="entry name" value="vnfG_nitrog"/>
    <property type="match status" value="1"/>
</dbReference>
<dbReference type="Pfam" id="PF03139">
    <property type="entry name" value="AnfG_VnfG"/>
    <property type="match status" value="1"/>
</dbReference>
<feature type="initiator methionine" description="Removed" evidence="1">
    <location>
        <position position="1"/>
    </location>
</feature>
<feature type="chain" id="PRO_0000213562" description="Nitrogenase vanadium-iron protein delta chain">
    <location>
        <begin position="2"/>
        <end position="113"/>
    </location>
</feature>
<name>VNFG_AZOSA</name>
<protein>
    <recommendedName>
        <fullName>Nitrogenase vanadium-iron protein delta chain</fullName>
        <ecNumber>1.18.6.1</ecNumber>
    </recommendedName>
    <alternativeName>
        <fullName>Dinitrogenase 2 subunit delta</fullName>
    </alternativeName>
    <alternativeName>
        <fullName>Nitrogenase component I</fullName>
    </alternativeName>
</protein>